<dbReference type="EMBL" id="AF074482">
    <property type="protein sequence ID" value="AAD03335.1"/>
    <property type="molecule type" value="mRNA"/>
</dbReference>
<dbReference type="EMBL" id="AJ011318">
    <property type="protein sequence ID" value="CAA09592.1"/>
    <property type="molecule type" value="Genomic_DNA"/>
</dbReference>
<dbReference type="EMBL" id="AF058795">
    <property type="protein sequence ID" value="AAC63994.1"/>
    <property type="molecule type" value="mRNA"/>
</dbReference>
<dbReference type="EMBL" id="AF109405">
    <property type="protein sequence ID" value="AAD03338.1"/>
    <property type="molecule type" value="mRNA"/>
</dbReference>
<dbReference type="RefSeq" id="NP_113990.1">
    <property type="nucleotide sequence ID" value="NM_031802.1"/>
</dbReference>
<dbReference type="SMR" id="O88871"/>
<dbReference type="BioGRID" id="249797">
    <property type="interactions" value="6"/>
</dbReference>
<dbReference type="ComplexPortal" id="CPX-404">
    <property type="entry name" value="GABA-B receptor complex"/>
</dbReference>
<dbReference type="CORUM" id="O88871"/>
<dbReference type="FunCoup" id="O88871">
    <property type="interactions" value="1516"/>
</dbReference>
<dbReference type="IntAct" id="O88871">
    <property type="interactions" value="4"/>
</dbReference>
<dbReference type="MINT" id="O88871"/>
<dbReference type="STRING" id="10116.ENSRNOP00000011573"/>
<dbReference type="BindingDB" id="O88871"/>
<dbReference type="ChEMBL" id="CHEMBL2111474"/>
<dbReference type="DrugCentral" id="O88871"/>
<dbReference type="GuidetoPHARMACOLOGY" id="241"/>
<dbReference type="GlyCosmos" id="O88871">
    <property type="glycosylation" value="5 sites, 2 glycans"/>
</dbReference>
<dbReference type="GlyGen" id="O88871">
    <property type="glycosylation" value="6 sites, 3 N-linked glycans (1 site), 3 N-linked;o-linked glycans (1 site)"/>
</dbReference>
<dbReference type="iPTMnet" id="O88871"/>
<dbReference type="PhosphoSitePlus" id="O88871"/>
<dbReference type="PaxDb" id="10116-ENSRNOP00000011573"/>
<dbReference type="ABCD" id="O88871">
    <property type="antibodies" value="2 sequenced antibodies"/>
</dbReference>
<dbReference type="GeneID" id="83633"/>
<dbReference type="KEGG" id="rno:83633"/>
<dbReference type="UCSC" id="RGD:619864">
    <property type="organism name" value="rat"/>
</dbReference>
<dbReference type="AGR" id="RGD:619864"/>
<dbReference type="CTD" id="9568"/>
<dbReference type="RGD" id="619864">
    <property type="gene designation" value="Gabbr2"/>
</dbReference>
<dbReference type="eggNOG" id="KOG1055">
    <property type="taxonomic scope" value="Eukaryota"/>
</dbReference>
<dbReference type="InParanoid" id="O88871"/>
<dbReference type="PhylomeDB" id="O88871"/>
<dbReference type="TreeFam" id="TF313965"/>
<dbReference type="Reactome" id="R-RNO-1296041">
    <property type="pathway name" value="Activation of G protein gated Potassium channels"/>
</dbReference>
<dbReference type="Reactome" id="R-RNO-418594">
    <property type="pathway name" value="G alpha (i) signalling events"/>
</dbReference>
<dbReference type="Reactome" id="R-RNO-420499">
    <property type="pathway name" value="Class C/3 (Metabotropic glutamate/pheromone receptors)"/>
</dbReference>
<dbReference type="Reactome" id="R-RNO-977444">
    <property type="pathway name" value="GABA B receptor activation"/>
</dbReference>
<dbReference type="Reactome" id="R-RNO-997272">
    <property type="pathway name" value="Inhibition of voltage gated Ca2+ channels via Gbeta/gamma subunits"/>
</dbReference>
<dbReference type="PRO" id="PR:O88871"/>
<dbReference type="Proteomes" id="UP000002494">
    <property type="component" value="Unplaced"/>
</dbReference>
<dbReference type="GO" id="GO:0005737">
    <property type="term" value="C:cytoplasm"/>
    <property type="evidence" value="ECO:0000266"/>
    <property type="project" value="RGD"/>
</dbReference>
<dbReference type="GO" id="GO:0030425">
    <property type="term" value="C:dendrite"/>
    <property type="evidence" value="ECO:0007669"/>
    <property type="project" value="UniProtKB-SubCell"/>
</dbReference>
<dbReference type="GO" id="GO:1902712">
    <property type="term" value="C:G protein-coupled GABA receptor complex"/>
    <property type="evidence" value="ECO:0000353"/>
    <property type="project" value="ComplexPortal"/>
</dbReference>
<dbReference type="GO" id="GO:0038039">
    <property type="term" value="C:G protein-coupled receptor heterodimeric complex"/>
    <property type="evidence" value="ECO:0000250"/>
    <property type="project" value="UniProtKB"/>
</dbReference>
<dbReference type="GO" id="GO:1902710">
    <property type="term" value="C:GABA receptor complex"/>
    <property type="evidence" value="ECO:0000266"/>
    <property type="project" value="RGD"/>
</dbReference>
<dbReference type="GO" id="GO:0098982">
    <property type="term" value="C:GABA-ergic synapse"/>
    <property type="evidence" value="ECO:0000314"/>
    <property type="project" value="SynGO"/>
</dbReference>
<dbReference type="GO" id="GO:0098978">
    <property type="term" value="C:glutamatergic synapse"/>
    <property type="evidence" value="ECO:0000314"/>
    <property type="project" value="SynGO"/>
</dbReference>
<dbReference type="GO" id="GO:0043005">
    <property type="term" value="C:neuron projection"/>
    <property type="evidence" value="ECO:0000266"/>
    <property type="project" value="RGD"/>
</dbReference>
<dbReference type="GO" id="GO:0043204">
    <property type="term" value="C:perikaryon"/>
    <property type="evidence" value="ECO:0007669"/>
    <property type="project" value="UniProtKB-SubCell"/>
</dbReference>
<dbReference type="GO" id="GO:0005886">
    <property type="term" value="C:plasma membrane"/>
    <property type="evidence" value="ECO:0000250"/>
    <property type="project" value="UniProtKB"/>
</dbReference>
<dbReference type="GO" id="GO:0045211">
    <property type="term" value="C:postsynaptic membrane"/>
    <property type="evidence" value="ECO:0000314"/>
    <property type="project" value="SynGO"/>
</dbReference>
<dbReference type="GO" id="GO:0042734">
    <property type="term" value="C:presynaptic membrane"/>
    <property type="evidence" value="ECO:0000314"/>
    <property type="project" value="SynGO"/>
</dbReference>
<dbReference type="GO" id="GO:0004965">
    <property type="term" value="F:G protein-coupled GABA receptor activity"/>
    <property type="evidence" value="ECO:0000314"/>
    <property type="project" value="RGD"/>
</dbReference>
<dbReference type="GO" id="GO:0046982">
    <property type="term" value="F:protein heterodimerization activity"/>
    <property type="evidence" value="ECO:0000266"/>
    <property type="project" value="RGD"/>
</dbReference>
<dbReference type="GO" id="GO:0007193">
    <property type="term" value="P:adenylate cyclase-inhibiting G protein-coupled receptor signaling pathway"/>
    <property type="evidence" value="ECO:0000314"/>
    <property type="project" value="ComplexPortal"/>
</dbReference>
<dbReference type="GO" id="GO:0007214">
    <property type="term" value="P:gamma-aminobutyric acid signaling pathway"/>
    <property type="evidence" value="ECO:0000314"/>
    <property type="project" value="RGD"/>
</dbReference>
<dbReference type="GO" id="GO:0150099">
    <property type="term" value="P:neuron-glial cell signaling"/>
    <property type="evidence" value="ECO:0000316"/>
    <property type="project" value="ARUK-UCL"/>
</dbReference>
<dbReference type="GO" id="GO:0051932">
    <property type="term" value="P:synaptic transmission, GABAergic"/>
    <property type="evidence" value="ECO:0000303"/>
    <property type="project" value="ComplexPortal"/>
</dbReference>
<dbReference type="CDD" id="cd15294">
    <property type="entry name" value="7tmC_GABA-B-R2"/>
    <property type="match status" value="1"/>
</dbReference>
<dbReference type="CDD" id="cd06366">
    <property type="entry name" value="PBP1_GABAb_receptor"/>
    <property type="match status" value="1"/>
</dbReference>
<dbReference type="FunFam" id="3.40.50.2300:FF:000063">
    <property type="entry name" value="Gamma-aminobutyric acid type B receptor subunit"/>
    <property type="match status" value="1"/>
</dbReference>
<dbReference type="FunFam" id="3.40.50.2300:FF:000072">
    <property type="entry name" value="Gamma-aminobutyric acid type B receptor subunit 2"/>
    <property type="match status" value="1"/>
</dbReference>
<dbReference type="Gene3D" id="3.40.50.2300">
    <property type="match status" value="2"/>
</dbReference>
<dbReference type="InterPro" id="IPR001828">
    <property type="entry name" value="ANF_lig-bd_rcpt"/>
</dbReference>
<dbReference type="InterPro" id="IPR041689">
    <property type="entry name" value="GBR2_CC"/>
</dbReference>
<dbReference type="InterPro" id="IPR002455">
    <property type="entry name" value="GPCR3_GABA-B"/>
</dbReference>
<dbReference type="InterPro" id="IPR000337">
    <property type="entry name" value="GPCR_3"/>
</dbReference>
<dbReference type="InterPro" id="IPR017978">
    <property type="entry name" value="GPCR_3_C"/>
</dbReference>
<dbReference type="InterPro" id="IPR017979">
    <property type="entry name" value="GPCR_3_CS"/>
</dbReference>
<dbReference type="InterPro" id="IPR002457">
    <property type="entry name" value="GPCR_3_GABA_rcpt_B2"/>
</dbReference>
<dbReference type="InterPro" id="IPR028082">
    <property type="entry name" value="Peripla_BP_I"/>
</dbReference>
<dbReference type="PANTHER" id="PTHR10519">
    <property type="entry name" value="GABA-B RECEPTOR"/>
    <property type="match status" value="1"/>
</dbReference>
<dbReference type="PANTHER" id="PTHR10519:SF74">
    <property type="entry name" value="GAMMA-AMINOBUTYRIC ACID TYPE B RECEPTOR SUBUNIT 2"/>
    <property type="match status" value="1"/>
</dbReference>
<dbReference type="Pfam" id="PF00003">
    <property type="entry name" value="7tm_3"/>
    <property type="match status" value="1"/>
</dbReference>
<dbReference type="Pfam" id="PF01094">
    <property type="entry name" value="ANF_receptor"/>
    <property type="match status" value="1"/>
</dbReference>
<dbReference type="Pfam" id="PF18455">
    <property type="entry name" value="GBR2_CC"/>
    <property type="match status" value="1"/>
</dbReference>
<dbReference type="PRINTS" id="PR01178">
    <property type="entry name" value="GABAB2RECPTR"/>
</dbReference>
<dbReference type="PRINTS" id="PR01176">
    <property type="entry name" value="GABABRECEPTR"/>
</dbReference>
<dbReference type="PRINTS" id="PR00248">
    <property type="entry name" value="GPCRMGR"/>
</dbReference>
<dbReference type="SUPFAM" id="SSF53822">
    <property type="entry name" value="Periplasmic binding protein-like I"/>
    <property type="match status" value="1"/>
</dbReference>
<dbReference type="PROSITE" id="PS00981">
    <property type="entry name" value="G_PROTEIN_RECEP_F3_3"/>
    <property type="match status" value="1"/>
</dbReference>
<dbReference type="PROSITE" id="PS50259">
    <property type="entry name" value="G_PROTEIN_RECEP_F3_4"/>
    <property type="match status" value="1"/>
</dbReference>
<proteinExistence type="evidence at protein level"/>
<keyword id="KW-1003">Cell membrane</keyword>
<keyword id="KW-0966">Cell projection</keyword>
<keyword id="KW-0175">Coiled coil</keyword>
<keyword id="KW-1015">Disulfide bond</keyword>
<keyword id="KW-0297">G-protein coupled receptor</keyword>
<keyword id="KW-0325">Glycoprotein</keyword>
<keyword id="KW-0472">Membrane</keyword>
<keyword id="KW-0597">Phosphoprotein</keyword>
<keyword id="KW-0628">Postsynaptic cell membrane</keyword>
<keyword id="KW-0675">Receptor</keyword>
<keyword id="KW-1185">Reference proteome</keyword>
<keyword id="KW-0732">Signal</keyword>
<keyword id="KW-0770">Synapse</keyword>
<keyword id="KW-0807">Transducer</keyword>
<keyword id="KW-0812">Transmembrane</keyword>
<keyword id="KW-1133">Transmembrane helix</keyword>
<feature type="signal peptide" evidence="4">
    <location>
        <begin position="1"/>
        <end position="40"/>
    </location>
</feature>
<feature type="chain" id="PRO_0000012953" description="Gamma-aminobutyric acid type B receptor subunit 2">
    <location>
        <begin position="41"/>
        <end position="940"/>
    </location>
</feature>
<feature type="topological domain" description="Extracellular" evidence="4">
    <location>
        <begin position="41"/>
        <end position="482"/>
    </location>
</feature>
<feature type="transmembrane region" description="Helical; Name=1" evidence="4">
    <location>
        <begin position="483"/>
        <end position="503"/>
    </location>
</feature>
<feature type="topological domain" description="Cytoplasmic" evidence="4">
    <location>
        <begin position="504"/>
        <end position="521"/>
    </location>
</feature>
<feature type="transmembrane region" description="Helical; Name=2" evidence="4">
    <location>
        <begin position="522"/>
        <end position="542"/>
    </location>
</feature>
<feature type="topological domain" description="Extracellular" evidence="4">
    <location>
        <begin position="543"/>
        <end position="550"/>
    </location>
</feature>
<feature type="transmembrane region" description="Helical; Name=3" evidence="4">
    <location>
        <begin position="551"/>
        <end position="571"/>
    </location>
</feature>
<feature type="topological domain" description="Cytoplasmic" evidence="4">
    <location>
        <begin position="572"/>
        <end position="596"/>
    </location>
</feature>
<feature type="transmembrane region" description="Helical; Name=4" evidence="4">
    <location>
        <begin position="597"/>
        <end position="617"/>
    </location>
</feature>
<feature type="topological domain" description="Extracellular" evidence="4">
    <location>
        <begin position="618"/>
        <end position="653"/>
    </location>
</feature>
<feature type="transmembrane region" description="Helical; Name=5" evidence="4">
    <location>
        <begin position="654"/>
        <end position="674"/>
    </location>
</feature>
<feature type="topological domain" description="Cytoplasmic" evidence="4">
    <location>
        <begin position="675"/>
        <end position="690"/>
    </location>
</feature>
<feature type="transmembrane region" description="Helical; Name=6" evidence="4">
    <location>
        <begin position="691"/>
        <end position="711"/>
    </location>
</feature>
<feature type="topological domain" description="Extracellular" evidence="4">
    <location>
        <begin position="712"/>
        <end position="719"/>
    </location>
</feature>
<feature type="transmembrane region" description="Helical; Name=7" evidence="4">
    <location>
        <begin position="720"/>
        <end position="740"/>
    </location>
</feature>
<feature type="topological domain" description="Cytoplasmic" evidence="4">
    <location>
        <begin position="741"/>
        <end position="940"/>
    </location>
</feature>
<feature type="region of interest" description="Disordered" evidence="5">
    <location>
        <begin position="762"/>
        <end position="789"/>
    </location>
</feature>
<feature type="coiled-coil region" evidence="4">
    <location>
        <begin position="780"/>
        <end position="818"/>
    </location>
</feature>
<feature type="compositionally biased region" description="Polar residues" evidence="5">
    <location>
        <begin position="772"/>
        <end position="786"/>
    </location>
</feature>
<feature type="modified residue" description="Phosphoserine" evidence="3">
    <location>
        <position position="775"/>
    </location>
</feature>
<feature type="modified residue" description="Phosphoserine" evidence="3">
    <location>
        <position position="778"/>
    </location>
</feature>
<feature type="modified residue" description="Phosphothreonine" evidence="24">
    <location>
        <position position="818"/>
    </location>
</feature>
<feature type="modified residue" description="Phosphoserine" evidence="24">
    <location>
        <position position="883"/>
    </location>
</feature>
<feature type="modified residue" description="Phosphoserine" evidence="3">
    <location>
        <position position="892"/>
    </location>
</feature>
<feature type="modified residue" description="Phosphoserine" evidence="3">
    <location>
        <position position="912"/>
    </location>
</feature>
<feature type="modified residue" description="Phosphoserine" evidence="3">
    <location>
        <position position="915"/>
    </location>
</feature>
<feature type="modified residue" description="Phosphoserine" evidence="3">
    <location>
        <position position="919"/>
    </location>
</feature>
<feature type="modified residue" description="Phosphoserine" evidence="3">
    <location>
        <position position="923"/>
    </location>
</feature>
<feature type="glycosylation site" description="N-linked (GlcNAc...) asparagine" evidence="4">
    <location>
        <position position="89"/>
    </location>
</feature>
<feature type="glycosylation site" description="N-linked (GlcNAc...) asparagine" evidence="4">
    <location>
        <position position="297"/>
    </location>
</feature>
<feature type="glycosylation site" description="N-linked (GlcNAc...) asparagine" evidence="25">
    <location>
        <position position="388"/>
    </location>
</feature>
<feature type="glycosylation site" description="N-linked (GlcNAc...) asparagine" evidence="4">
    <location>
        <position position="403"/>
    </location>
</feature>
<feature type="glycosylation site" description="N-linked (GlcNAc...) asparagine" evidence="4">
    <location>
        <position position="452"/>
    </location>
</feature>
<feature type="disulfide bond" evidence="1">
    <location>
        <begin position="107"/>
        <end position="134"/>
    </location>
</feature>
<feature type="disulfide bond" evidence="1">
    <location>
        <begin position="236"/>
        <end position="265"/>
    </location>
</feature>
<feature type="disulfide bond" evidence="1">
    <location>
        <begin position="264"/>
        <end position="301"/>
    </location>
</feature>
<feature type="sequence variant" evidence="15">
    <original>P</original>
    <variation>PP</variation>
    <location>
        <position position="19"/>
    </location>
</feature>
<feature type="sequence variant">
    <original>P</original>
    <variation>R</variation>
    <location>
        <position position="19"/>
    </location>
</feature>
<feature type="sequence variant" evidence="15">
    <original>F</original>
    <variation>Y</variation>
    <location>
        <position position="337"/>
    </location>
</feature>
<feature type="sequence conflict" description="In Ref. 2; CAA09592." evidence="22" ref="2">
    <original>S</original>
    <variation>T</variation>
    <location>
        <position position="343"/>
    </location>
</feature>
<protein>
    <recommendedName>
        <fullName>Gamma-aminobutyric acid type B receptor subunit 2</fullName>
        <shortName>GABA-B receptor 2</shortName>
        <shortName>GABA-B-R2</shortName>
        <shortName>GABA-BR2</shortName>
        <shortName>GABABR2</shortName>
        <shortName>Gb2</shortName>
    </recommendedName>
    <alternativeName>
        <fullName>G-protein coupled receptor 51</fullName>
    </alternativeName>
</protein>
<sequence length="940" mass="105751">MASPPSSGQPRPPPPPPPPARLLLPLLLSLLLWLAPGAWGWTRGAPRPPPSSPPLSIMGLMPLTKEVAKGSIGRGVLPAVELAIEQIRNESLLRPYFLDLRLYDTECDNAKGLKAFYDAIKYGPNHLMVFGGVCPSVTSIIAESLQGWNLVQLSFAATTPVLADKKKYPYFFRTVPSDNAVNPAILKLLKHFRWRRVGTLTQDVQRFSEVRNDLTGVLYGEDIEISDTESFSNDPCTSVKKLKGNDVRIILGQFDQNMAAKVFCCAFEESMFGSKYQWIIPGWYEPAWWEQVHVEANSSRCLRRSLLAAMEGYIGVDFEPLSSKQIKTISGKTPQQFEREYNSKRSGVGPSKFHGYAYDGIWVIAKTLQRAMETLHASSRHQRIQDFNYTDHTLGKIILNAMNETNFFGVTGQVVFRNGERMGTIKFTQFQDSREVKVGEYNAVADTLEIINDTIRFQGSEPPKDKTIILEQLRKISLPLYSILSALTILGMIMASAFLFFNIKNRNQKLIKMSSPYMNNLIILGGMLSYASIFLFGLDGSFVSEKTFETLCTVRTWILTVGYTTAFGAMFAKTWRVHAIFKNVKMKKKIIKDQKLLVIVGGMLLIDLCILICWQAVDPLRRTVERYSMEPDPAGRDISIRPLLEHCENTHMTIWLGIVYAYKGLLMLFGCFLAWETRNVSIPALNDSKYIGMSVYNVGIMCIIGAAVSFLTRDQPNVQFCIVALVIIFCSTITLCLVFVPKLITLRTNPDAATQNRRFQFTQNQKKEDSKTSTSVTSVNQASTSRLEGLQSENHRLRMKITELDKDLEEVTMQLQDTPEKTTYIKQNHYQELNDILSLGNFTESTDGGKAILKNHLDQNPQLQWNTTEPSRTCKDPIEDINSPEHIQRRLSLQLPILHHAYLPSIGGVDASCVSPCVSPTASPRHRHVPPSFRVMVSGL</sequence>
<gene>
    <name type="primary">Gabbr2</name>
    <name type="synonym">Gpr51</name>
</gene>
<comment type="function">
    <text evidence="2 6 7 8 10 13 14 15 16">Component of a heterodimeric G-protein coupled receptor for GABA, formed by GABBR1 and GABBR2 (PubMed:9872315, PubMed:9872317, PubMed:9872744). Within the heterodimeric GABA receptor, only GABBR1 seems to bind agonists, while GABBR2 mediates coupling to G proteins (PubMed:10658574, PubMed:9872317). Ligand binding causes a conformation change that triggers signaling via guanine nucleotide-binding proteins (G proteins) and modulates the activity of down-stream effectors, such as adenylate cyclase (PubMed:10075644, PubMed:10924501, PubMed:9872315, PubMed:9872317, PubMed:9872744, Ref.4). Signaling inhibits adenylate cyclase, stimulates phospholipase A2, activates potassium channels, inactivates voltage-dependent calcium-channels and modulates inositol phospholipid hydrolysis (PubMed:10457184, PubMed:10924501, PubMed:9872315, PubMed:9872317, PubMed:9872744). Plays a critical role in the fine-tuning of inhibitory synaptic transmission (PubMed:10457184, PubMed:9872317, PubMed:9872744). Pre-synaptic GABA receptor inhibits neurotransmitter release by down-regulating high-voltage activated calcium channels, whereas postsynaptic GABA receptor decreases neuronal excitability by activating a prominent inwardly rectifying potassium (Kir) conductance that underlies the late inhibitory postsynaptic potentials (PubMed:10924501, PubMed:9872744). Not only implicated in synaptic inhibition but also in hippocampal long-term potentiation, slow wave sleep, muscle relaxation and antinociception (By similarity).</text>
</comment>
<comment type="subunit">
    <text evidence="10 12 14 15">Heterodimer of GABBR1 and GABBR2 (PubMed:9872315, PubMed:9872317, PubMed:9872744). Homodimers may form, but are inactive (PubMed:9872317). Interacts (via C-terminus) with ATF4 (via leucine zipper domain) (PubMed:10924501). Interacts with KCTD8, KCTD12 and KCTD16; this interaction determines the pharmacology and kinetics of the receptor response, the KCTD proteins markedly accelerating the GABA-B response, although to different extents (PubMed:20400944).</text>
</comment>
<comment type="interaction">
    <interactant intactId="EBI-7090239">
        <id>O88871</id>
    </interactant>
    <interactant intactId="EBI-8072674">
        <id>P27732</id>
        <label>Cacna1d</label>
    </interactant>
    <organismsDiffer>false</organismsDiffer>
    <experiments>6</experiments>
</comment>
<comment type="interaction">
    <interactant intactId="EBI-7090239">
        <id>O88871</id>
    </interactant>
    <interactant intactId="EBI-7090268">
        <id>Q9Z0U4</id>
        <label>Gabbr1</label>
    </interactant>
    <organismsDiffer>false</organismsDiffer>
    <experiments>8</experiments>
</comment>
<comment type="subcellular location">
    <subcellularLocation>
        <location evidence="13 14 23">Cell membrane</location>
        <topology evidence="14">Multi-pass membrane protein</topology>
    </subcellularLocation>
    <subcellularLocation>
        <location evidence="14">Postsynaptic cell membrane</location>
        <topology evidence="14">Multi-pass membrane protein</topology>
    </subcellularLocation>
    <subcellularLocation>
        <location evidence="11">Perikaryon</location>
    </subcellularLocation>
    <subcellularLocation>
        <location evidence="7">Cell projection</location>
        <location evidence="7">Dendrite</location>
    </subcellularLocation>
    <text evidence="23">Coexpression of GABBR1 and GABBR2 is required for GABBR1 maturation and transport to the plasma membrane (PubMed:10457184). In contrast, GABBR2 does not depend on GABBR1 for transport to the cell membrane.</text>
</comment>
<comment type="tissue specificity">
    <text evidence="9 13 14 15">Highly expressed in areas of the brain including thalamic nuclei, the hippocampus, cerebellar Purkinje cells and the medial habenula, and moderately expressed in the cerebral cortex, certain anterioventral thalamic nuclei, dorsal medial hypothalamic nucleus and suprachiasmatic nuclei (PubMed:10727622, PubMed:9872315, PubMed:9872317, PubMed:9872744). Also weakly expressed in the testis (PubMed:9872744).</text>
</comment>
<comment type="developmental stage">
    <text evidence="14 15">On the day of birth, expressed in the regions of the brain including hippocampus, thalamic nuclei and cortex (PubMed:9872744). Abundant in brain cortex and cerebellum throughout postnatal development whereas its expression in spinal cord gradually decreases (PubMed:9872317).</text>
</comment>
<comment type="domain">
    <text>Alpha-helical parts of the C-terminal intracellular region mediate heterodimeric interaction with GABA-B receptor 1.</text>
</comment>
<comment type="similarity">
    <text evidence="22">Belongs to the G-protein coupled receptor 3 family. GABA-B receptor subfamily.</text>
</comment>
<organism>
    <name type="scientific">Rattus norvegicus</name>
    <name type="common">Rat</name>
    <dbReference type="NCBI Taxonomy" id="10116"/>
    <lineage>
        <taxon>Eukaryota</taxon>
        <taxon>Metazoa</taxon>
        <taxon>Chordata</taxon>
        <taxon>Craniata</taxon>
        <taxon>Vertebrata</taxon>
        <taxon>Euteleostomi</taxon>
        <taxon>Mammalia</taxon>
        <taxon>Eutheria</taxon>
        <taxon>Euarchontoglires</taxon>
        <taxon>Glires</taxon>
        <taxon>Rodentia</taxon>
        <taxon>Myomorpha</taxon>
        <taxon>Muroidea</taxon>
        <taxon>Muridae</taxon>
        <taxon>Murinae</taxon>
        <taxon>Rattus</taxon>
    </lineage>
</organism>
<accession>O88871</accession>
<accession>Q9JK36</accession>
<accession>Q9QWU2</accession>
<evidence type="ECO:0000250" key="1"/>
<evidence type="ECO:0000250" key="2">
    <source>
        <dbReference type="UniProtKB" id="O75899"/>
    </source>
</evidence>
<evidence type="ECO:0000250" key="3">
    <source>
        <dbReference type="UniProtKB" id="Q80T41"/>
    </source>
</evidence>
<evidence type="ECO:0000255" key="4"/>
<evidence type="ECO:0000256" key="5">
    <source>
        <dbReference type="SAM" id="MobiDB-lite"/>
    </source>
</evidence>
<evidence type="ECO:0000269" key="6">
    <source>
    </source>
</evidence>
<evidence type="ECO:0000269" key="7">
    <source>
    </source>
</evidence>
<evidence type="ECO:0000269" key="8">
    <source>
    </source>
</evidence>
<evidence type="ECO:0000269" key="9">
    <source>
    </source>
</evidence>
<evidence type="ECO:0000269" key="10">
    <source>
    </source>
</evidence>
<evidence type="ECO:0000269" key="11">
    <source>
    </source>
</evidence>
<evidence type="ECO:0000269" key="12">
    <source>
    </source>
</evidence>
<evidence type="ECO:0000269" key="13">
    <source>
    </source>
</evidence>
<evidence type="ECO:0000269" key="14">
    <source>
    </source>
</evidence>
<evidence type="ECO:0000269" key="15">
    <source>
    </source>
</evidence>
<evidence type="ECO:0000269" key="16">
    <source ref="4"/>
</evidence>
<evidence type="ECO:0000303" key="17">
    <source>
    </source>
</evidence>
<evidence type="ECO:0000303" key="18">
    <source>
    </source>
</evidence>
<evidence type="ECO:0000303" key="19">
    <source>
    </source>
</evidence>
<evidence type="ECO:0000303" key="20">
    <source>
    </source>
</evidence>
<evidence type="ECO:0000303" key="21">
    <source ref="4"/>
</evidence>
<evidence type="ECO:0000305" key="22"/>
<evidence type="ECO:0000305" key="23">
    <source>
    </source>
</evidence>
<evidence type="ECO:0007744" key="24">
    <source>
    </source>
</evidence>
<evidence type="ECO:0007744" key="25">
    <source>
    </source>
</evidence>
<name>GABR2_RAT</name>
<reference key="1">
    <citation type="journal article" date="1998" name="Nature">
        <title>GABA(B) receptors function as a heteromeric assembly of the subunits GABA(B)R1 and GABA(B)R2.</title>
        <authorList>
            <person name="Jones K.A."/>
            <person name="Borowsky B."/>
            <person name="Tamm J.A."/>
            <person name="Craig D.A."/>
            <person name="Durkin M.M."/>
            <person name="Dai M."/>
            <person name="Yao W.-J."/>
            <person name="Johnson M."/>
            <person name="Gunwaldsen C.A."/>
            <person name="Huang L.-Y."/>
            <person name="Tang C."/>
            <person name="Shen Q."/>
            <person name="Salon J.A."/>
            <person name="Morse K."/>
            <person name="Laz T."/>
            <person name="Smith K.E."/>
            <person name="Nagarathnam D."/>
            <person name="Noble S.A."/>
            <person name="Branchek T.A."/>
            <person name="Gerald C."/>
        </authorList>
    </citation>
    <scope>NUCLEOTIDE SEQUENCE [MRNA]</scope>
    <scope>FUNCTION</scope>
    <scope>INTERACTION WITH GABBR1</scope>
    <scope>SUBCELLULAR LOCATION</scope>
    <scope>TISSUE SPECIFICITY</scope>
    <source>
        <tissue evidence="18">Hypothalamus</tissue>
    </source>
</reference>
<reference key="2">
    <citation type="journal article" date="1998" name="Nature">
        <title>GABA-B receptor subtypes assemble into functional heteromeric complexes.</title>
        <authorList>
            <person name="Kaupmann K."/>
            <person name="Malitschek B."/>
            <person name="Schuler V."/>
            <person name="Heid J."/>
            <person name="Froestl W."/>
            <person name="Beck P."/>
            <person name="Mosbacher J."/>
            <person name="Bischoff S."/>
            <person name="Kulik A."/>
            <person name="Shigemoto R."/>
            <person name="Karschin A."/>
            <person name="Bettler B."/>
        </authorList>
    </citation>
    <scope>NUCLEOTIDE SEQUENCE [GENOMIC DNA]</scope>
    <scope>FUNCTION</scope>
    <scope>INTERACTION WITH GABBR1</scope>
    <scope>SUBCELLULAR LOCATION</scope>
    <scope>TISSUE SPECIFICITY</scope>
    <scope>DEVELOPMENTAL STAGE</scope>
    <source>
        <tissue>Brain cortex</tissue>
        <tissue evidence="19">Cerebellum</tissue>
    </source>
</reference>
<reference key="3">
    <citation type="journal article" date="2000" name="Brain Res.">
        <title>Distribution of the GABA(B) receptor subunit gb2 in rat CNS.</title>
        <authorList>
            <person name="Clark J.A."/>
            <person name="Mezey E."/>
            <person name="Lam A.S."/>
            <person name="Bonner T.I."/>
        </authorList>
    </citation>
    <scope>NUCLEOTIDE SEQUENCE [MRNA]</scope>
    <scope>TISSUE SPECIFICITY</scope>
    <source>
        <tissue evidence="17">Brain cortex</tissue>
    </source>
</reference>
<reference key="4">
    <citation type="submission" date="1999-01" db="EMBL/GenBank/DDBJ databases">
        <authorList>
            <person name="Borowsky B."/>
            <person name="Laz T."/>
            <person name="Gerald C."/>
        </authorList>
    </citation>
    <scope>NUCLEOTIDE SEQUENCE [MRNA]</scope>
    <source>
        <tissue evidence="21">Hypothalamus</tissue>
    </source>
</reference>
<reference key="5">
    <citation type="journal article" date="1999" name="Bioorg. Med. Chem.">
        <title>Synthesis of the nanomolar photoaffinity GABA(B) receptor ligand CGP 71872 reveals diversity in the tissue distribution of GABA(B) receptor forms.</title>
        <authorList>
            <person name="Belley M."/>
            <person name="Sullivan R."/>
            <person name="Reeves A."/>
            <person name="Evans J.F."/>
            <person name="O'Neill G.P."/>
            <person name="Ng G.Y.K."/>
        </authorList>
    </citation>
    <scope>FUNCTION</scope>
</reference>
<reference key="6">
    <citation type="journal article" date="1999" name="Eur. J. Neurosci.">
        <title>Alternative splicing generates a novel isoform of the rat metabotropic GABA(B)R1 receptor.</title>
        <authorList>
            <person name="Pfaff T."/>
            <person name="Malitschek B."/>
            <person name="Kaupmann K."/>
            <person name="Prezeau L."/>
            <person name="Pin J.-P."/>
            <person name="Bettler B."/>
            <person name="Karschin A."/>
        </authorList>
    </citation>
    <scope>FUNCTION</scope>
    <scope>SUBCELLULAR LOCATION</scope>
    <source>
        <strain>Wistar</strain>
        <tissue>Hippocampus</tissue>
    </source>
</reference>
<reference key="7">
    <citation type="journal article" date="1999" name="J. Biol. Chem.">
        <title>Identification of a GABAB receptor subunit, gb2, required for functional GABAB receptor activity.</title>
        <authorList>
            <person name="Ng G.Y.K."/>
            <person name="Clark J."/>
            <person name="Coulombe N."/>
            <person name="Ethier N."/>
            <person name="Hebert T.E."/>
            <person name="Sullivan R."/>
            <person name="Kargman S."/>
            <person name="Chateauneuf A."/>
            <person name="Tsukamoto N."/>
            <person name="McDonald T."/>
            <person name="Whiting P."/>
            <person name="Mezey E."/>
            <person name="Johnson M.P."/>
            <person name="Liu Q."/>
            <person name="Kolakowski L.F. Jr."/>
            <person name="Evans J.F."/>
            <person name="Bonner T.I."/>
            <person name="O'Neill G.P."/>
        </authorList>
    </citation>
    <scope>FUNCTION</scope>
</reference>
<reference key="8">
    <citation type="journal article" date="1999" name="Science">
        <title>Role of heteromer formation in GABAB receptor function.</title>
        <authorList>
            <person name="Kuner R."/>
            <person name="Koehr G."/>
            <person name="Gruenewald S."/>
            <person name="Eisenhardt G."/>
            <person name="Bach A."/>
            <person name="Kornau H.-C."/>
        </authorList>
    </citation>
    <scope>FUNCTION</scope>
    <scope>INTERACTION WITH GABBR1</scope>
    <scope>TISSUE SPECIFICITY</scope>
    <scope>DEVELOPMENTAL STAGE</scope>
    <scope>VARIANTS PRO-19 INS AND TYR-337</scope>
    <source>
        <tissue evidence="20">Hippocampus</tissue>
    </source>
</reference>
<reference key="9">
    <citation type="journal article" date="2000" name="J. Biol. Chem.">
        <title>The metabotropic GABAB receptor directly interacts with the activating transcription factor 4.</title>
        <authorList>
            <person name="Nehring R.B."/>
            <person name="Horikawa H.P.M."/>
            <person name="El Far O."/>
            <person name="Kneussel M."/>
            <person name="Brandstatter J.H."/>
            <person name="Stamm S."/>
            <person name="Wischmeyer E."/>
            <person name="Betz H."/>
            <person name="Karschin A."/>
        </authorList>
    </citation>
    <scope>FUNCTION</scope>
    <scope>INTERACTION WITH ATF4</scope>
</reference>
<reference key="10">
    <citation type="journal article" date="2004" name="J. Biol. Chem.">
        <title>Marlin-1, a novel RNA-binding protein associates with GABA receptors.</title>
        <authorList>
            <person name="Couve A."/>
            <person name="Restituito S."/>
            <person name="Brandon J.M."/>
            <person name="Charles K.J."/>
            <person name="Bawagan H."/>
            <person name="Freeman K.B."/>
            <person name="Pangalos M.N."/>
            <person name="Calver A.R."/>
            <person name="Moss S.J."/>
        </authorList>
    </citation>
    <scope>SUBCELLULAR LOCATION</scope>
</reference>
<reference key="11">
    <citation type="journal article" date="2010" name="Nature">
        <title>Native GABA(B) receptors are heteromultimers with a family of auxiliary subunits.</title>
        <authorList>
            <person name="Schwenk J."/>
            <person name="Metz M."/>
            <person name="Zolles G."/>
            <person name="Turecek R."/>
            <person name="Fritzius T."/>
            <person name="Bildl W."/>
            <person name="Tarusawa E."/>
            <person name="Kulik A."/>
            <person name="Unger A."/>
            <person name="Ivankova K."/>
            <person name="Seddik R."/>
            <person name="Tiao J.Y."/>
            <person name="Rajalu M."/>
            <person name="Trojanova J."/>
            <person name="Rohde V."/>
            <person name="Gassmann M."/>
            <person name="Schulte U."/>
            <person name="Fakler B."/>
            <person name="Bettler B."/>
        </authorList>
    </citation>
    <scope>INTERACTION WITH KCTD8; KCTD12 AND KCTD16</scope>
</reference>
<reference key="12">
    <citation type="journal article" date="2012" name="Nat. Commun.">
        <title>Quantitative maps of protein phosphorylation sites across 14 different rat organs and tissues.</title>
        <authorList>
            <person name="Lundby A."/>
            <person name="Secher A."/>
            <person name="Lage K."/>
            <person name="Nordsborg N.B."/>
            <person name="Dmytriyev A."/>
            <person name="Lundby C."/>
            <person name="Olsen J.V."/>
        </authorList>
    </citation>
    <scope>PHOSPHORYLATION [LARGE SCALE ANALYSIS] AT THR-818 AND SER-883</scope>
    <scope>IDENTIFICATION BY MASS SPECTROMETRY [LARGE SCALE ANALYSIS]</scope>
</reference>
<reference key="13">
    <citation type="journal article" date="2013" name="J. Proteome Res.">
        <title>Site-specific glycan-peptide analysis for determination of N-glycoproteome heterogeneity.</title>
        <authorList>
            <person name="Parker B.L."/>
            <person name="Thaysen-Andersen M."/>
            <person name="Solis N."/>
            <person name="Scott N.E."/>
            <person name="Larsen M.R."/>
            <person name="Graham M.E."/>
            <person name="Packer N.H."/>
            <person name="Cordwell S.J."/>
        </authorList>
    </citation>
    <scope>GLYCOSYLATION [LARGE SCALE ANALYSIS] AT ASN-388</scope>
    <scope>IDENTIFICATION BY MASS SPECTROMETRY [LARGE SCALE ANALYSIS]</scope>
    <source>
        <tissue>Brain</tissue>
    </source>
</reference>